<name>RR19_PINKO</name>
<dbReference type="EMBL" id="AY228468">
    <property type="protein sequence ID" value="AAO74081.1"/>
    <property type="molecule type" value="Genomic_DNA"/>
</dbReference>
<dbReference type="RefSeq" id="NP_817234.1">
    <property type="nucleotide sequence ID" value="NC_004677.2"/>
</dbReference>
<dbReference type="SMR" id="Q85WY8"/>
<dbReference type="GeneID" id="806975"/>
<dbReference type="GO" id="GO:0009507">
    <property type="term" value="C:chloroplast"/>
    <property type="evidence" value="ECO:0007669"/>
    <property type="project" value="UniProtKB-SubCell"/>
</dbReference>
<dbReference type="GO" id="GO:0005763">
    <property type="term" value="C:mitochondrial small ribosomal subunit"/>
    <property type="evidence" value="ECO:0007669"/>
    <property type="project" value="TreeGrafter"/>
</dbReference>
<dbReference type="GO" id="GO:0019843">
    <property type="term" value="F:rRNA binding"/>
    <property type="evidence" value="ECO:0007669"/>
    <property type="project" value="UniProtKB-UniRule"/>
</dbReference>
<dbReference type="GO" id="GO:0003735">
    <property type="term" value="F:structural constituent of ribosome"/>
    <property type="evidence" value="ECO:0007669"/>
    <property type="project" value="InterPro"/>
</dbReference>
<dbReference type="GO" id="GO:0000028">
    <property type="term" value="P:ribosomal small subunit assembly"/>
    <property type="evidence" value="ECO:0007669"/>
    <property type="project" value="TreeGrafter"/>
</dbReference>
<dbReference type="GO" id="GO:0006412">
    <property type="term" value="P:translation"/>
    <property type="evidence" value="ECO:0007669"/>
    <property type="project" value="UniProtKB-UniRule"/>
</dbReference>
<dbReference type="FunFam" id="3.30.860.10:FF:000001">
    <property type="entry name" value="30S ribosomal protein S19"/>
    <property type="match status" value="1"/>
</dbReference>
<dbReference type="Gene3D" id="3.30.860.10">
    <property type="entry name" value="30s Ribosomal Protein S19, Chain A"/>
    <property type="match status" value="1"/>
</dbReference>
<dbReference type="HAMAP" id="MF_00531">
    <property type="entry name" value="Ribosomal_uS19"/>
    <property type="match status" value="1"/>
</dbReference>
<dbReference type="InterPro" id="IPR002222">
    <property type="entry name" value="Ribosomal_uS19"/>
</dbReference>
<dbReference type="InterPro" id="IPR005732">
    <property type="entry name" value="Ribosomal_uS19_bac-type"/>
</dbReference>
<dbReference type="InterPro" id="IPR020934">
    <property type="entry name" value="Ribosomal_uS19_CS"/>
</dbReference>
<dbReference type="InterPro" id="IPR023575">
    <property type="entry name" value="Ribosomal_uS19_SF"/>
</dbReference>
<dbReference type="NCBIfam" id="TIGR01050">
    <property type="entry name" value="rpsS_bact"/>
    <property type="match status" value="1"/>
</dbReference>
<dbReference type="PANTHER" id="PTHR11880">
    <property type="entry name" value="RIBOSOMAL PROTEIN S19P FAMILY MEMBER"/>
    <property type="match status" value="1"/>
</dbReference>
<dbReference type="PANTHER" id="PTHR11880:SF8">
    <property type="entry name" value="SMALL RIBOSOMAL SUBUNIT PROTEIN US19M"/>
    <property type="match status" value="1"/>
</dbReference>
<dbReference type="Pfam" id="PF00203">
    <property type="entry name" value="Ribosomal_S19"/>
    <property type="match status" value="1"/>
</dbReference>
<dbReference type="PIRSF" id="PIRSF002144">
    <property type="entry name" value="Ribosomal_S19"/>
    <property type="match status" value="1"/>
</dbReference>
<dbReference type="PRINTS" id="PR00975">
    <property type="entry name" value="RIBOSOMALS19"/>
</dbReference>
<dbReference type="SUPFAM" id="SSF54570">
    <property type="entry name" value="Ribosomal protein S19"/>
    <property type="match status" value="1"/>
</dbReference>
<dbReference type="PROSITE" id="PS00323">
    <property type="entry name" value="RIBOSOMAL_S19"/>
    <property type="match status" value="1"/>
</dbReference>
<sequence length="92" mass="10602">MARSLKKNPFVANHLLRKIKNLNIKKEKKIIVTWSRASVIVPAMIGHTIAVHNGREHLPIYVTDRMVDHKLGEFAPTLLFQGHARNDKKSRR</sequence>
<proteinExistence type="inferred from homology"/>
<reference key="1">
    <citation type="submission" date="2003-02" db="EMBL/GenBank/DDBJ databases">
        <title>Complete nucleotide sequence of Pinus koraiensis.</title>
        <authorList>
            <person name="Noh E.W."/>
            <person name="Lee J.S."/>
            <person name="Choi Y.I."/>
            <person name="Han M.S."/>
            <person name="Yi Y.S."/>
            <person name="Han S.U."/>
        </authorList>
    </citation>
    <scope>NUCLEOTIDE SEQUENCE [LARGE SCALE GENOMIC DNA]</scope>
    <source>
        <strain>KangWon16</strain>
    </source>
</reference>
<comment type="function">
    <text evidence="1">Protein S19 forms a complex with S13 that binds strongly to the 16S ribosomal RNA.</text>
</comment>
<comment type="subcellular location">
    <subcellularLocation>
        <location>Plastid</location>
        <location>Chloroplast</location>
    </subcellularLocation>
</comment>
<comment type="similarity">
    <text evidence="1">Belongs to the universal ribosomal protein uS19 family.</text>
</comment>
<protein>
    <recommendedName>
        <fullName evidence="1">Small ribosomal subunit protein uS19c</fullName>
    </recommendedName>
    <alternativeName>
        <fullName evidence="2">30S ribosomal protein S19, chloroplastic</fullName>
    </alternativeName>
</protein>
<accession>Q85WY8</accession>
<evidence type="ECO:0000255" key="1">
    <source>
        <dbReference type="HAMAP-Rule" id="MF_00531"/>
    </source>
</evidence>
<evidence type="ECO:0000305" key="2"/>
<keyword id="KW-0150">Chloroplast</keyword>
<keyword id="KW-0934">Plastid</keyword>
<keyword id="KW-0687">Ribonucleoprotein</keyword>
<keyword id="KW-0689">Ribosomal protein</keyword>
<keyword id="KW-0694">RNA-binding</keyword>
<keyword id="KW-0699">rRNA-binding</keyword>
<geneLocation type="chloroplast"/>
<gene>
    <name evidence="1" type="primary">rps19</name>
</gene>
<organism>
    <name type="scientific">Pinus koraiensis</name>
    <name type="common">Korean pine</name>
    <dbReference type="NCBI Taxonomy" id="88728"/>
    <lineage>
        <taxon>Eukaryota</taxon>
        <taxon>Viridiplantae</taxon>
        <taxon>Streptophyta</taxon>
        <taxon>Embryophyta</taxon>
        <taxon>Tracheophyta</taxon>
        <taxon>Spermatophyta</taxon>
        <taxon>Pinopsida</taxon>
        <taxon>Pinidae</taxon>
        <taxon>Conifers I</taxon>
        <taxon>Pinales</taxon>
        <taxon>Pinaceae</taxon>
        <taxon>Pinus</taxon>
        <taxon>Pinus subgen. Strobus</taxon>
    </lineage>
</organism>
<feature type="chain" id="PRO_0000129984" description="Small ribosomal subunit protein uS19c">
    <location>
        <begin position="1"/>
        <end position="92"/>
    </location>
</feature>